<feature type="chain" id="PRO_1000204482" description="Probable nicotinate-nucleotide adenylyltransferase">
    <location>
        <begin position="1"/>
        <end position="211"/>
    </location>
</feature>
<comment type="function">
    <text evidence="1">Catalyzes the reversible adenylation of nicotinate mononucleotide (NaMN) to nicotinic acid adenine dinucleotide (NaAD).</text>
</comment>
<comment type="catalytic activity">
    <reaction evidence="1">
        <text>nicotinate beta-D-ribonucleotide + ATP + H(+) = deamido-NAD(+) + diphosphate</text>
        <dbReference type="Rhea" id="RHEA:22860"/>
        <dbReference type="ChEBI" id="CHEBI:15378"/>
        <dbReference type="ChEBI" id="CHEBI:30616"/>
        <dbReference type="ChEBI" id="CHEBI:33019"/>
        <dbReference type="ChEBI" id="CHEBI:57502"/>
        <dbReference type="ChEBI" id="CHEBI:58437"/>
        <dbReference type="EC" id="2.7.7.18"/>
    </reaction>
</comment>
<comment type="pathway">
    <text evidence="1">Cofactor biosynthesis; NAD(+) biosynthesis; deamido-NAD(+) from nicotinate D-ribonucleotide: step 1/1.</text>
</comment>
<comment type="similarity">
    <text evidence="1">Belongs to the NadD family.</text>
</comment>
<organism>
    <name type="scientific">Corynebacterium kroppenstedtii (strain DSM 44385 / JCM 11950 / CIP 105744 / CCUG 35717)</name>
    <dbReference type="NCBI Taxonomy" id="645127"/>
    <lineage>
        <taxon>Bacteria</taxon>
        <taxon>Bacillati</taxon>
        <taxon>Actinomycetota</taxon>
        <taxon>Actinomycetes</taxon>
        <taxon>Mycobacteriales</taxon>
        <taxon>Corynebacteriaceae</taxon>
        <taxon>Corynebacterium</taxon>
    </lineage>
</organism>
<protein>
    <recommendedName>
        <fullName evidence="1">Probable nicotinate-nucleotide adenylyltransferase</fullName>
        <ecNumber evidence="1">2.7.7.18</ecNumber>
    </recommendedName>
    <alternativeName>
        <fullName evidence="1">Deamido-NAD(+) diphosphorylase</fullName>
    </alternativeName>
    <alternativeName>
        <fullName evidence="1">Deamido-NAD(+) pyrophosphorylase</fullName>
    </alternativeName>
    <alternativeName>
        <fullName evidence="1">Nicotinate mononucleotide adenylyltransferase</fullName>
        <shortName evidence="1">NaMN adenylyltransferase</shortName>
    </alternativeName>
</protein>
<evidence type="ECO:0000255" key="1">
    <source>
        <dbReference type="HAMAP-Rule" id="MF_00244"/>
    </source>
</evidence>
<dbReference type="EC" id="2.7.7.18" evidence="1"/>
<dbReference type="EMBL" id="CP001620">
    <property type="protein sequence ID" value="ACR18095.1"/>
    <property type="molecule type" value="Genomic_DNA"/>
</dbReference>
<dbReference type="RefSeq" id="WP_012731982.1">
    <property type="nucleotide sequence ID" value="NC_012704.1"/>
</dbReference>
<dbReference type="SMR" id="C4LJU0"/>
<dbReference type="STRING" id="645127.ckrop_1354"/>
<dbReference type="KEGG" id="ckp:ckrop_1354"/>
<dbReference type="eggNOG" id="COG1057">
    <property type="taxonomic scope" value="Bacteria"/>
</dbReference>
<dbReference type="HOGENOM" id="CLU_069765_1_1_11"/>
<dbReference type="OrthoDB" id="5295945at2"/>
<dbReference type="UniPathway" id="UPA00253">
    <property type="reaction ID" value="UER00332"/>
</dbReference>
<dbReference type="Proteomes" id="UP000001473">
    <property type="component" value="Chromosome"/>
</dbReference>
<dbReference type="GO" id="GO:0005524">
    <property type="term" value="F:ATP binding"/>
    <property type="evidence" value="ECO:0007669"/>
    <property type="project" value="UniProtKB-KW"/>
</dbReference>
<dbReference type="GO" id="GO:0004515">
    <property type="term" value="F:nicotinate-nucleotide adenylyltransferase activity"/>
    <property type="evidence" value="ECO:0007669"/>
    <property type="project" value="UniProtKB-UniRule"/>
</dbReference>
<dbReference type="GO" id="GO:0009435">
    <property type="term" value="P:NAD biosynthetic process"/>
    <property type="evidence" value="ECO:0007669"/>
    <property type="project" value="UniProtKB-UniRule"/>
</dbReference>
<dbReference type="CDD" id="cd02165">
    <property type="entry name" value="NMNAT"/>
    <property type="match status" value="1"/>
</dbReference>
<dbReference type="FunFam" id="3.40.50.620:FF:000039">
    <property type="entry name" value="Probable nicotinate-nucleotide adenylyltransferase"/>
    <property type="match status" value="1"/>
</dbReference>
<dbReference type="Gene3D" id="3.40.50.620">
    <property type="entry name" value="HUPs"/>
    <property type="match status" value="1"/>
</dbReference>
<dbReference type="HAMAP" id="MF_00244">
    <property type="entry name" value="NaMN_adenylyltr"/>
    <property type="match status" value="1"/>
</dbReference>
<dbReference type="InterPro" id="IPR004821">
    <property type="entry name" value="Cyt_trans-like"/>
</dbReference>
<dbReference type="InterPro" id="IPR005248">
    <property type="entry name" value="NadD/NMNAT"/>
</dbReference>
<dbReference type="InterPro" id="IPR014729">
    <property type="entry name" value="Rossmann-like_a/b/a_fold"/>
</dbReference>
<dbReference type="NCBIfam" id="TIGR00125">
    <property type="entry name" value="cyt_tran_rel"/>
    <property type="match status" value="1"/>
</dbReference>
<dbReference type="NCBIfam" id="TIGR00482">
    <property type="entry name" value="nicotinate (nicotinamide) nucleotide adenylyltransferase"/>
    <property type="match status" value="1"/>
</dbReference>
<dbReference type="NCBIfam" id="NF000840">
    <property type="entry name" value="PRK00071.1-3"/>
    <property type="match status" value="1"/>
</dbReference>
<dbReference type="PANTHER" id="PTHR39321">
    <property type="entry name" value="NICOTINATE-NUCLEOTIDE ADENYLYLTRANSFERASE-RELATED"/>
    <property type="match status" value="1"/>
</dbReference>
<dbReference type="PANTHER" id="PTHR39321:SF3">
    <property type="entry name" value="PHOSPHOPANTETHEINE ADENYLYLTRANSFERASE"/>
    <property type="match status" value="1"/>
</dbReference>
<dbReference type="Pfam" id="PF01467">
    <property type="entry name" value="CTP_transf_like"/>
    <property type="match status" value="1"/>
</dbReference>
<dbReference type="SUPFAM" id="SSF52374">
    <property type="entry name" value="Nucleotidylyl transferase"/>
    <property type="match status" value="1"/>
</dbReference>
<gene>
    <name evidence="1" type="primary">nadD</name>
    <name type="ordered locus">ckrop_1354</name>
</gene>
<sequence length="211" mass="23378">MQTSTNYPRLGIMGGTFDPIHHGHLVAASEVADLFSLDRVLFVPTGQPWQKKNRTVTPAEDRYLMTTIATASNPRFSVSRVDIDRGGPTYTVDTLHDLHERYPHAELFFITGADAVARMATWRDCTEMMSLATFVAVTRPGYSLEKTELGPLGDSVTMVEVPAMAISSTNIRARARANRPIWYLVPDGVVQYIAKEKLYLPSGQVGASSMW</sequence>
<name>NADD_CORK4</name>
<keyword id="KW-0067">ATP-binding</keyword>
<keyword id="KW-0520">NAD</keyword>
<keyword id="KW-0547">Nucleotide-binding</keyword>
<keyword id="KW-0548">Nucleotidyltransferase</keyword>
<keyword id="KW-0662">Pyridine nucleotide biosynthesis</keyword>
<keyword id="KW-1185">Reference proteome</keyword>
<keyword id="KW-0808">Transferase</keyword>
<accession>C4LJU0</accession>
<reference key="1">
    <citation type="journal article" date="2008" name="J. Biotechnol.">
        <title>Ultrafast pyrosequencing of Corynebacterium kroppenstedtii DSM44385 revealed insights into the physiology of a lipophilic corynebacterium that lacks mycolic acids.</title>
        <authorList>
            <person name="Tauch A."/>
            <person name="Schneider J."/>
            <person name="Szczepanowski R."/>
            <person name="Tilker A."/>
            <person name="Viehoever P."/>
            <person name="Gartemann K.-H."/>
            <person name="Arnold W."/>
            <person name="Blom J."/>
            <person name="Brinkrolf K."/>
            <person name="Brune I."/>
            <person name="Goetker S."/>
            <person name="Weisshaar B."/>
            <person name="Goesmann A."/>
            <person name="Droege M."/>
            <person name="Puehler A."/>
        </authorList>
    </citation>
    <scope>NUCLEOTIDE SEQUENCE [LARGE SCALE GENOMIC DNA]</scope>
    <source>
        <strain>DSM 44385 / JCM 11950 / CIP 105744 / CCUG 35717</strain>
    </source>
</reference>
<proteinExistence type="inferred from homology"/>